<sequence>MIGLFLAAPLVLSSAVWANPQQELSSRLSLVNAFSANFDQKVVSPEGDVLVEGKGDVTIKRPNLFRWNTVTPDENLLVSDGKTLWYYSPFIEQVTAMWLKDATEQTPFVLLTRNSASDWDNYNVAQTSDTFTLTPKDTTSTMGKFVVTVAKTGEVRNFSVVEQDGQRSNFKFRQFSKQVPKANIFTFTPPKGVELDDQRN</sequence>
<gene>
    <name evidence="1" type="primary">lolA</name>
    <name type="ordered locus">PBPRA1163</name>
</gene>
<dbReference type="EMBL" id="CR378666">
    <property type="protein sequence ID" value="CAG19574.1"/>
    <property type="molecule type" value="Genomic_DNA"/>
</dbReference>
<dbReference type="SMR" id="Q6LT02"/>
<dbReference type="STRING" id="298386.PBPRA1163"/>
<dbReference type="KEGG" id="ppr:PBPRA1163"/>
<dbReference type="eggNOG" id="COG2834">
    <property type="taxonomic scope" value="Bacteria"/>
</dbReference>
<dbReference type="HOGENOM" id="CLU_087560_1_1_6"/>
<dbReference type="Proteomes" id="UP000000593">
    <property type="component" value="Chromosome 1"/>
</dbReference>
<dbReference type="GO" id="GO:0030288">
    <property type="term" value="C:outer membrane-bounded periplasmic space"/>
    <property type="evidence" value="ECO:0007669"/>
    <property type="project" value="TreeGrafter"/>
</dbReference>
<dbReference type="GO" id="GO:0044874">
    <property type="term" value="P:lipoprotein localization to outer membrane"/>
    <property type="evidence" value="ECO:0007669"/>
    <property type="project" value="UniProtKB-UniRule"/>
</dbReference>
<dbReference type="GO" id="GO:0042953">
    <property type="term" value="P:lipoprotein transport"/>
    <property type="evidence" value="ECO:0007669"/>
    <property type="project" value="InterPro"/>
</dbReference>
<dbReference type="CDD" id="cd16325">
    <property type="entry name" value="LolA"/>
    <property type="match status" value="1"/>
</dbReference>
<dbReference type="Gene3D" id="2.50.20.10">
    <property type="entry name" value="Lipoprotein localisation LolA/LolB/LppX"/>
    <property type="match status" value="1"/>
</dbReference>
<dbReference type="HAMAP" id="MF_00240">
    <property type="entry name" value="LolA"/>
    <property type="match status" value="1"/>
</dbReference>
<dbReference type="InterPro" id="IPR029046">
    <property type="entry name" value="LolA/LolB/LppX"/>
</dbReference>
<dbReference type="InterPro" id="IPR004564">
    <property type="entry name" value="OM_lipoprot_carrier_LolA-like"/>
</dbReference>
<dbReference type="InterPro" id="IPR018323">
    <property type="entry name" value="OM_lipoprot_carrier_LolA_Pbac"/>
</dbReference>
<dbReference type="NCBIfam" id="TIGR00547">
    <property type="entry name" value="lolA"/>
    <property type="match status" value="1"/>
</dbReference>
<dbReference type="PANTHER" id="PTHR35869">
    <property type="entry name" value="OUTER-MEMBRANE LIPOPROTEIN CARRIER PROTEIN"/>
    <property type="match status" value="1"/>
</dbReference>
<dbReference type="PANTHER" id="PTHR35869:SF1">
    <property type="entry name" value="OUTER-MEMBRANE LIPOPROTEIN CARRIER PROTEIN"/>
    <property type="match status" value="1"/>
</dbReference>
<dbReference type="Pfam" id="PF03548">
    <property type="entry name" value="LolA"/>
    <property type="match status" value="1"/>
</dbReference>
<dbReference type="SUPFAM" id="SSF89392">
    <property type="entry name" value="Prokaryotic lipoproteins and lipoprotein localization factors"/>
    <property type="match status" value="1"/>
</dbReference>
<evidence type="ECO:0000255" key="1">
    <source>
        <dbReference type="HAMAP-Rule" id="MF_00240"/>
    </source>
</evidence>
<proteinExistence type="inferred from homology"/>
<protein>
    <recommendedName>
        <fullName evidence="1">Outer-membrane lipoprotein carrier protein</fullName>
    </recommendedName>
</protein>
<reference key="1">
    <citation type="journal article" date="2005" name="Science">
        <title>Life at depth: Photobacterium profundum genome sequence and expression analysis.</title>
        <authorList>
            <person name="Vezzi A."/>
            <person name="Campanaro S."/>
            <person name="D'Angelo M."/>
            <person name="Simonato F."/>
            <person name="Vitulo N."/>
            <person name="Lauro F.M."/>
            <person name="Cestaro A."/>
            <person name="Malacrida G."/>
            <person name="Simionati B."/>
            <person name="Cannata N."/>
            <person name="Romualdi C."/>
            <person name="Bartlett D.H."/>
            <person name="Valle G."/>
        </authorList>
    </citation>
    <scope>NUCLEOTIDE SEQUENCE [LARGE SCALE GENOMIC DNA]</scope>
    <source>
        <strain>ATCC BAA-1253 / SS9</strain>
    </source>
</reference>
<feature type="signal peptide" evidence="1">
    <location>
        <begin position="1"/>
        <end position="18"/>
    </location>
</feature>
<feature type="chain" id="PRO_0000336656" description="Outer-membrane lipoprotein carrier protein">
    <location>
        <begin position="19"/>
        <end position="200"/>
    </location>
</feature>
<organism>
    <name type="scientific">Photobacterium profundum (strain SS9)</name>
    <dbReference type="NCBI Taxonomy" id="298386"/>
    <lineage>
        <taxon>Bacteria</taxon>
        <taxon>Pseudomonadati</taxon>
        <taxon>Pseudomonadota</taxon>
        <taxon>Gammaproteobacteria</taxon>
        <taxon>Vibrionales</taxon>
        <taxon>Vibrionaceae</taxon>
        <taxon>Photobacterium</taxon>
    </lineage>
</organism>
<keyword id="KW-0143">Chaperone</keyword>
<keyword id="KW-0574">Periplasm</keyword>
<keyword id="KW-0653">Protein transport</keyword>
<keyword id="KW-1185">Reference proteome</keyword>
<keyword id="KW-0732">Signal</keyword>
<keyword id="KW-0813">Transport</keyword>
<accession>Q6LT02</accession>
<name>LOLA_PHOPR</name>
<comment type="function">
    <text evidence="1">Participates in the translocation of lipoproteins from the inner membrane to the outer membrane. Only forms a complex with a lipoprotein if the residue after the N-terminal Cys is not an aspartate (The Asp acts as a targeting signal to indicate that the lipoprotein should stay in the inner membrane).</text>
</comment>
<comment type="subunit">
    <text evidence="1">Monomer.</text>
</comment>
<comment type="subcellular location">
    <subcellularLocation>
        <location evidence="1">Periplasm</location>
    </subcellularLocation>
</comment>
<comment type="similarity">
    <text evidence="1">Belongs to the LolA family.</text>
</comment>